<dbReference type="EMBL" id="CP000026">
    <property type="protein sequence ID" value="AAV79093.1"/>
    <property type="molecule type" value="Genomic_DNA"/>
</dbReference>
<dbReference type="RefSeq" id="WP_000008119.1">
    <property type="nucleotide sequence ID" value="NC_006511.1"/>
</dbReference>
<dbReference type="SMR" id="Q5PIT4"/>
<dbReference type="KEGG" id="spt:SPA3277"/>
<dbReference type="HOGENOM" id="CLU_095787_0_0_6"/>
<dbReference type="Proteomes" id="UP000008185">
    <property type="component" value="Chromosome"/>
</dbReference>
<dbReference type="GO" id="GO:0005886">
    <property type="term" value="C:plasma membrane"/>
    <property type="evidence" value="ECO:0007669"/>
    <property type="project" value="UniProtKB-SubCell"/>
</dbReference>
<dbReference type="GO" id="GO:0008381">
    <property type="term" value="F:mechanosensitive monoatomic ion channel activity"/>
    <property type="evidence" value="ECO:0007669"/>
    <property type="project" value="UniProtKB-UniRule"/>
</dbReference>
<dbReference type="FunFam" id="1.10.1200.120:FF:000001">
    <property type="entry name" value="Large-conductance mechanosensitive channel"/>
    <property type="match status" value="1"/>
</dbReference>
<dbReference type="Gene3D" id="1.10.1200.120">
    <property type="entry name" value="Large-conductance mechanosensitive channel, MscL, domain 1"/>
    <property type="match status" value="1"/>
</dbReference>
<dbReference type="HAMAP" id="MF_00115">
    <property type="entry name" value="MscL"/>
    <property type="match status" value="1"/>
</dbReference>
<dbReference type="InterPro" id="IPR019823">
    <property type="entry name" value="Mechanosensitive_channel_CS"/>
</dbReference>
<dbReference type="InterPro" id="IPR001185">
    <property type="entry name" value="MS_channel"/>
</dbReference>
<dbReference type="InterPro" id="IPR037673">
    <property type="entry name" value="MSC/AndL"/>
</dbReference>
<dbReference type="InterPro" id="IPR036019">
    <property type="entry name" value="MscL_channel"/>
</dbReference>
<dbReference type="NCBIfam" id="TIGR00220">
    <property type="entry name" value="mscL"/>
    <property type="match status" value="1"/>
</dbReference>
<dbReference type="NCBIfam" id="NF001841">
    <property type="entry name" value="PRK00567.1-1"/>
    <property type="match status" value="1"/>
</dbReference>
<dbReference type="NCBIfam" id="NF001843">
    <property type="entry name" value="PRK00567.1-4"/>
    <property type="match status" value="1"/>
</dbReference>
<dbReference type="PANTHER" id="PTHR30266:SF2">
    <property type="entry name" value="LARGE-CONDUCTANCE MECHANOSENSITIVE CHANNEL"/>
    <property type="match status" value="1"/>
</dbReference>
<dbReference type="PANTHER" id="PTHR30266">
    <property type="entry name" value="MECHANOSENSITIVE CHANNEL MSCL"/>
    <property type="match status" value="1"/>
</dbReference>
<dbReference type="Pfam" id="PF01741">
    <property type="entry name" value="MscL"/>
    <property type="match status" value="1"/>
</dbReference>
<dbReference type="PRINTS" id="PR01264">
    <property type="entry name" value="MECHCHANNEL"/>
</dbReference>
<dbReference type="SUPFAM" id="SSF81330">
    <property type="entry name" value="Gated mechanosensitive channel"/>
    <property type="match status" value="1"/>
</dbReference>
<dbReference type="PROSITE" id="PS01327">
    <property type="entry name" value="MSCL"/>
    <property type="match status" value="1"/>
</dbReference>
<organism>
    <name type="scientific">Salmonella paratyphi A (strain ATCC 9150 / SARB42)</name>
    <dbReference type="NCBI Taxonomy" id="295319"/>
    <lineage>
        <taxon>Bacteria</taxon>
        <taxon>Pseudomonadati</taxon>
        <taxon>Pseudomonadota</taxon>
        <taxon>Gammaproteobacteria</taxon>
        <taxon>Enterobacterales</taxon>
        <taxon>Enterobacteriaceae</taxon>
        <taxon>Salmonella</taxon>
    </lineage>
</organism>
<accession>Q5PIT4</accession>
<feature type="chain" id="PRO_0000238032" description="Large-conductance mechanosensitive channel">
    <location>
        <begin position="1"/>
        <end position="137"/>
    </location>
</feature>
<feature type="transmembrane region" description="Helical" evidence="1">
    <location>
        <begin position="10"/>
        <end position="30"/>
    </location>
</feature>
<feature type="transmembrane region" description="Helical" evidence="1">
    <location>
        <begin position="76"/>
        <end position="96"/>
    </location>
</feature>
<sequence length="137" mass="15074">MSFIKEFREFAMRGNVVDLAVGVIIGAAFGKIVSSLVADIIMPPLGLLIGGIDFKQFAFTLREAQGDIPAVVMHYGVFIQNVFDFVIVAFAIFVAIKLINRLNRKKAEEPAAPPAPSKEEVLLGEIRDLLKEQNNRS</sequence>
<protein>
    <recommendedName>
        <fullName evidence="1">Large-conductance mechanosensitive channel</fullName>
    </recommendedName>
</protein>
<name>MSCL_SALPA</name>
<proteinExistence type="inferred from homology"/>
<comment type="function">
    <text evidence="1">Channel that opens in response to stretch forces in the membrane lipid bilayer. May participate in the regulation of osmotic pressure changes within the cell.</text>
</comment>
<comment type="subunit">
    <text evidence="1">Homopentamer.</text>
</comment>
<comment type="subcellular location">
    <subcellularLocation>
        <location evidence="1">Cell inner membrane</location>
        <topology evidence="1">Multi-pass membrane protein</topology>
    </subcellularLocation>
</comment>
<comment type="similarity">
    <text evidence="1">Belongs to the MscL family.</text>
</comment>
<evidence type="ECO:0000255" key="1">
    <source>
        <dbReference type="HAMAP-Rule" id="MF_00115"/>
    </source>
</evidence>
<gene>
    <name evidence="1" type="primary">mscL</name>
    <name type="ordered locus">SPA3277</name>
</gene>
<keyword id="KW-0997">Cell inner membrane</keyword>
<keyword id="KW-1003">Cell membrane</keyword>
<keyword id="KW-0407">Ion channel</keyword>
<keyword id="KW-0406">Ion transport</keyword>
<keyword id="KW-0472">Membrane</keyword>
<keyword id="KW-0812">Transmembrane</keyword>
<keyword id="KW-1133">Transmembrane helix</keyword>
<keyword id="KW-0813">Transport</keyword>
<reference key="1">
    <citation type="journal article" date="2004" name="Nat. Genet.">
        <title>Comparison of genome degradation in Paratyphi A and Typhi, human-restricted serovars of Salmonella enterica that cause typhoid.</title>
        <authorList>
            <person name="McClelland M."/>
            <person name="Sanderson K.E."/>
            <person name="Clifton S.W."/>
            <person name="Latreille P."/>
            <person name="Porwollik S."/>
            <person name="Sabo A."/>
            <person name="Meyer R."/>
            <person name="Bieri T."/>
            <person name="Ozersky P."/>
            <person name="McLellan M."/>
            <person name="Harkins C.R."/>
            <person name="Wang C."/>
            <person name="Nguyen C."/>
            <person name="Berghoff A."/>
            <person name="Elliott G."/>
            <person name="Kohlberg S."/>
            <person name="Strong C."/>
            <person name="Du F."/>
            <person name="Carter J."/>
            <person name="Kremizki C."/>
            <person name="Layman D."/>
            <person name="Leonard S."/>
            <person name="Sun H."/>
            <person name="Fulton L."/>
            <person name="Nash W."/>
            <person name="Miner T."/>
            <person name="Minx P."/>
            <person name="Delehaunty K."/>
            <person name="Fronick C."/>
            <person name="Magrini V."/>
            <person name="Nhan M."/>
            <person name="Warren W."/>
            <person name="Florea L."/>
            <person name="Spieth J."/>
            <person name="Wilson R.K."/>
        </authorList>
    </citation>
    <scope>NUCLEOTIDE SEQUENCE [LARGE SCALE GENOMIC DNA]</scope>
    <source>
        <strain>ATCC 9150 / SARB42</strain>
    </source>
</reference>